<reference key="1">
    <citation type="journal article" date="2007" name="Virology">
        <title>Genome of the Acidianus bottle-shaped virus and insights into the replication and packaging mechanisms.</title>
        <authorList>
            <person name="Peng X."/>
            <person name="Basta T."/>
            <person name="Haring M."/>
            <person name="Garrett R.A."/>
            <person name="Prangishvili D."/>
        </authorList>
    </citation>
    <scope>NUCLEOTIDE SEQUENCE [GENOMIC DNA]</scope>
</reference>
<keyword id="KW-1185">Reference proteome</keyword>
<accession>A4ZUD8</accession>
<protein>
    <recommendedName>
        <fullName>Uncharacterized protein ORF83</fullName>
    </recommendedName>
</protein>
<organism>
    <name type="scientific">Acidianus bottle-shaped virus (isolate Italy/Pozzuoli)</name>
    <name type="common">ABV</name>
    <dbReference type="NCBI Taxonomy" id="654911"/>
    <lineage>
        <taxon>Viruses</taxon>
        <taxon>Viruses incertae sedis</taxon>
        <taxon>Ampullaviridae</taxon>
        <taxon>Bottigliavirus</taxon>
        <taxon>Bottigliavirus ABV</taxon>
    </lineage>
</organism>
<gene>
    <name type="ORF">ORF83</name>
</gene>
<name>Y083_ABVP</name>
<feature type="chain" id="PRO_0000384837" description="Uncharacterized protein ORF83">
    <location>
        <begin position="1"/>
        <end position="83"/>
    </location>
</feature>
<dbReference type="EMBL" id="EF432053">
    <property type="protein sequence ID" value="ABP73442.1"/>
    <property type="molecule type" value="Genomic_DNA"/>
</dbReference>
<dbReference type="RefSeq" id="YP_001210356.1">
    <property type="nucleotide sequence ID" value="NC_009452.1"/>
</dbReference>
<dbReference type="SMR" id="A4ZUD8"/>
<dbReference type="GeneID" id="5129826"/>
<dbReference type="KEGG" id="vg:5129826"/>
<dbReference type="Proteomes" id="UP000000513">
    <property type="component" value="Segment"/>
</dbReference>
<sequence length="83" mass="9683">MNDTFYYELKENVSNLKSLSKKLYDYVDTLLTPNLSVDKGILINMLRTFANQVDITYYYFELVETKIDSDDPLSPVISTLREC</sequence>
<proteinExistence type="predicted"/>
<organismHost>
    <name type="scientific">Acidianus convivator</name>
    <dbReference type="NCBI Taxonomy" id="269667"/>
</organismHost>